<comment type="function">
    <text evidence="1">Dual-specificity methyltransferase that catalyzes the formation of 5-methyluridine at position 54 (m5U54) in all tRNAs, and that of position 341 (m5U341) in tmRNA (transfer-mRNA).</text>
</comment>
<comment type="catalytic activity">
    <reaction evidence="1">
        <text>uridine(54) in tRNA + S-adenosyl-L-methionine = 5-methyluridine(54) in tRNA + S-adenosyl-L-homocysteine + H(+)</text>
        <dbReference type="Rhea" id="RHEA:42712"/>
        <dbReference type="Rhea" id="RHEA-COMP:10167"/>
        <dbReference type="Rhea" id="RHEA-COMP:10193"/>
        <dbReference type="ChEBI" id="CHEBI:15378"/>
        <dbReference type="ChEBI" id="CHEBI:57856"/>
        <dbReference type="ChEBI" id="CHEBI:59789"/>
        <dbReference type="ChEBI" id="CHEBI:65315"/>
        <dbReference type="ChEBI" id="CHEBI:74447"/>
        <dbReference type="EC" id="2.1.1.35"/>
    </reaction>
</comment>
<comment type="catalytic activity">
    <reaction evidence="1">
        <text>uridine(341) in tmRNA + S-adenosyl-L-methionine = 5-methyluridine(341) in tmRNA + S-adenosyl-L-homocysteine + H(+)</text>
        <dbReference type="Rhea" id="RHEA:43612"/>
        <dbReference type="Rhea" id="RHEA-COMP:10630"/>
        <dbReference type="Rhea" id="RHEA-COMP:10631"/>
        <dbReference type="ChEBI" id="CHEBI:15378"/>
        <dbReference type="ChEBI" id="CHEBI:57856"/>
        <dbReference type="ChEBI" id="CHEBI:59789"/>
        <dbReference type="ChEBI" id="CHEBI:65315"/>
        <dbReference type="ChEBI" id="CHEBI:74447"/>
    </reaction>
</comment>
<comment type="similarity">
    <text evidence="1">Belongs to the class I-like SAM-binding methyltransferase superfamily. RNA M5U methyltransferase family. TrmA subfamily.</text>
</comment>
<organism>
    <name type="scientific">Haemophilus influenzae (strain 86-028NP)</name>
    <dbReference type="NCBI Taxonomy" id="281310"/>
    <lineage>
        <taxon>Bacteria</taxon>
        <taxon>Pseudomonadati</taxon>
        <taxon>Pseudomonadota</taxon>
        <taxon>Gammaproteobacteria</taxon>
        <taxon>Pasteurellales</taxon>
        <taxon>Pasteurellaceae</taxon>
        <taxon>Haemophilus</taxon>
    </lineage>
</organism>
<gene>
    <name evidence="1" type="primary">trmA</name>
    <name type="ordered locus">NTHI1014</name>
</gene>
<accession>Q4QM53</accession>
<proteinExistence type="inferred from homology"/>
<name>TRMA_HAEI8</name>
<dbReference type="EC" id="2.1.1.-" evidence="1"/>
<dbReference type="EC" id="2.1.1.35" evidence="1"/>
<dbReference type="EMBL" id="CP000057">
    <property type="protein sequence ID" value="AAX87894.1"/>
    <property type="molecule type" value="Genomic_DNA"/>
</dbReference>
<dbReference type="RefSeq" id="WP_005693197.1">
    <property type="nucleotide sequence ID" value="NC_007146.2"/>
</dbReference>
<dbReference type="SMR" id="Q4QM53"/>
<dbReference type="GeneID" id="93219888"/>
<dbReference type="KEGG" id="hit:NTHI1014"/>
<dbReference type="HOGENOM" id="CLU_043022_0_0_6"/>
<dbReference type="Proteomes" id="UP000002525">
    <property type="component" value="Chromosome"/>
</dbReference>
<dbReference type="GO" id="GO:0005829">
    <property type="term" value="C:cytosol"/>
    <property type="evidence" value="ECO:0007669"/>
    <property type="project" value="TreeGrafter"/>
</dbReference>
<dbReference type="GO" id="GO:0019843">
    <property type="term" value="F:rRNA binding"/>
    <property type="evidence" value="ECO:0007669"/>
    <property type="project" value="TreeGrafter"/>
</dbReference>
<dbReference type="GO" id="GO:0030697">
    <property type="term" value="F:tRNA (uracil(54)-C5)-methyltransferase activity, S-adenosyl methionine-dependent"/>
    <property type="evidence" value="ECO:0007669"/>
    <property type="project" value="UniProtKB-UniRule"/>
</dbReference>
<dbReference type="GO" id="GO:0000049">
    <property type="term" value="F:tRNA binding"/>
    <property type="evidence" value="ECO:0007669"/>
    <property type="project" value="TreeGrafter"/>
</dbReference>
<dbReference type="GO" id="GO:0030488">
    <property type="term" value="P:tRNA methylation"/>
    <property type="evidence" value="ECO:0007669"/>
    <property type="project" value="UniProtKB-UniRule"/>
</dbReference>
<dbReference type="CDD" id="cd02440">
    <property type="entry name" value="AdoMet_MTases"/>
    <property type="match status" value="1"/>
</dbReference>
<dbReference type="FunFam" id="2.40.50.1070:FF:000001">
    <property type="entry name" value="tRNA/tmRNA (uracil-C(5))-methyltransferase"/>
    <property type="match status" value="1"/>
</dbReference>
<dbReference type="FunFam" id="3.40.50.150:FF:000012">
    <property type="entry name" value="tRNA/tmRNA (uracil-C(5))-methyltransferase"/>
    <property type="match status" value="1"/>
</dbReference>
<dbReference type="Gene3D" id="2.40.50.1070">
    <property type="match status" value="1"/>
</dbReference>
<dbReference type="Gene3D" id="3.40.50.150">
    <property type="entry name" value="Vaccinia Virus protein VP39"/>
    <property type="match status" value="1"/>
</dbReference>
<dbReference type="HAMAP" id="MF_01011">
    <property type="entry name" value="RNA_methyltr_TrmA"/>
    <property type="match status" value="1"/>
</dbReference>
<dbReference type="InterPro" id="IPR030390">
    <property type="entry name" value="MeTrfase_TrmA_AS"/>
</dbReference>
<dbReference type="InterPro" id="IPR030391">
    <property type="entry name" value="MeTrfase_TrmA_CS"/>
</dbReference>
<dbReference type="InterPro" id="IPR029063">
    <property type="entry name" value="SAM-dependent_MTases_sf"/>
</dbReference>
<dbReference type="InterPro" id="IPR011869">
    <property type="entry name" value="TrmA_MeTrfase"/>
</dbReference>
<dbReference type="InterPro" id="IPR010280">
    <property type="entry name" value="U5_MeTrfase_fam"/>
</dbReference>
<dbReference type="NCBIfam" id="TIGR02143">
    <property type="entry name" value="trmA_only"/>
    <property type="match status" value="1"/>
</dbReference>
<dbReference type="PANTHER" id="PTHR47790">
    <property type="entry name" value="TRNA/TMRNA (URACIL-C(5))-METHYLTRANSFERASE"/>
    <property type="match status" value="1"/>
</dbReference>
<dbReference type="PANTHER" id="PTHR47790:SF2">
    <property type="entry name" value="TRNA_TMRNA (URACIL-C(5))-METHYLTRANSFERASE"/>
    <property type="match status" value="1"/>
</dbReference>
<dbReference type="Pfam" id="PF05958">
    <property type="entry name" value="tRNA_U5-meth_tr"/>
    <property type="match status" value="1"/>
</dbReference>
<dbReference type="SUPFAM" id="SSF53335">
    <property type="entry name" value="S-adenosyl-L-methionine-dependent methyltransferases"/>
    <property type="match status" value="1"/>
</dbReference>
<dbReference type="PROSITE" id="PS51687">
    <property type="entry name" value="SAM_MT_RNA_M5U"/>
    <property type="match status" value="1"/>
</dbReference>
<dbReference type="PROSITE" id="PS01230">
    <property type="entry name" value="TRMA_1"/>
    <property type="match status" value="1"/>
</dbReference>
<dbReference type="PROSITE" id="PS01231">
    <property type="entry name" value="TRMA_2"/>
    <property type="match status" value="1"/>
</dbReference>
<keyword id="KW-0489">Methyltransferase</keyword>
<keyword id="KW-0949">S-adenosyl-L-methionine</keyword>
<keyword id="KW-0808">Transferase</keyword>
<keyword id="KW-0819">tRNA processing</keyword>
<feature type="chain" id="PRO_0000281444" description="tRNA/tmRNA (uracil-C(5))-methyltransferase">
    <location>
        <begin position="1"/>
        <end position="363"/>
    </location>
</feature>
<feature type="active site" description="Nucleophile" evidence="1">
    <location>
        <position position="321"/>
    </location>
</feature>
<feature type="active site" description="Proton acceptor" evidence="1">
    <location>
        <position position="355"/>
    </location>
</feature>
<feature type="binding site" evidence="1">
    <location>
        <position position="187"/>
    </location>
    <ligand>
        <name>S-adenosyl-L-methionine</name>
        <dbReference type="ChEBI" id="CHEBI:59789"/>
    </ligand>
</feature>
<feature type="binding site" evidence="1">
    <location>
        <position position="215"/>
    </location>
    <ligand>
        <name>S-adenosyl-L-methionine</name>
        <dbReference type="ChEBI" id="CHEBI:59789"/>
    </ligand>
</feature>
<feature type="binding site" evidence="1">
    <location>
        <position position="220"/>
    </location>
    <ligand>
        <name>S-adenosyl-L-methionine</name>
        <dbReference type="ChEBI" id="CHEBI:59789"/>
    </ligand>
</feature>
<feature type="binding site" evidence="1">
    <location>
        <position position="236"/>
    </location>
    <ligand>
        <name>S-adenosyl-L-methionine</name>
        <dbReference type="ChEBI" id="CHEBI:59789"/>
    </ligand>
</feature>
<feature type="binding site" evidence="1">
    <location>
        <position position="296"/>
    </location>
    <ligand>
        <name>S-adenosyl-L-methionine</name>
        <dbReference type="ChEBI" id="CHEBI:59789"/>
    </ligand>
</feature>
<sequence length="363" mass="42230">MQLPISQYNELLQKKLEKLTALLHPFNAPDIQVFDSPTSHYRMRAEFRIWHEQDDFYHIMFDQATLQRYRVDEFPIASMLINRMMQTLLPLLKQQEVLHKKLFQIDYLSTLSNKIIVSLLYHKTLTEEWESAAKNLKDLLEKQDFDVQIIGRASKQKICFEQDYVDEVLPVNGRNYVYRQVENSFTQPNATVNCKMLEWAIDCTQNSEGDLLELYCGNGNFSIALAQNFRKVLATEIAKPSVAAAQFNIAENKVDNLQIIRMSAEEFTQAMNGVRAFNRLKGIDLKSYECNTIFVDPPRAGLDPDTVKLVQNYDRILYISCNPHTLCDNLVELSKTHRIEKAALFDQFPYTDHMESGLWLIRK</sequence>
<evidence type="ECO:0000255" key="1">
    <source>
        <dbReference type="HAMAP-Rule" id="MF_01011"/>
    </source>
</evidence>
<protein>
    <recommendedName>
        <fullName evidence="1">tRNA/tmRNA (uracil-C(5))-methyltransferase</fullName>
        <ecNumber evidence="1">2.1.1.-</ecNumber>
        <ecNumber evidence="1">2.1.1.35</ecNumber>
    </recommendedName>
    <alternativeName>
        <fullName evidence="1">tRNA (uracil(54)-C(5))-methyltransferase</fullName>
    </alternativeName>
    <alternativeName>
        <fullName evidence="1">tRNA(m5U54)-methyltransferase</fullName>
        <shortName evidence="1">RUMT</shortName>
    </alternativeName>
    <alternativeName>
        <fullName evidence="1">tmRNA (uracil(341)-C(5))-methyltransferase</fullName>
    </alternativeName>
</protein>
<reference key="1">
    <citation type="journal article" date="2005" name="J. Bacteriol.">
        <title>Genomic sequence of an otitis media isolate of nontypeable Haemophilus influenzae: comparative study with H. influenzae serotype d, strain KW20.</title>
        <authorList>
            <person name="Harrison A."/>
            <person name="Dyer D.W."/>
            <person name="Gillaspy A."/>
            <person name="Ray W.C."/>
            <person name="Mungur R."/>
            <person name="Carson M.B."/>
            <person name="Zhong H."/>
            <person name="Gipson J."/>
            <person name="Gipson M."/>
            <person name="Johnson L.S."/>
            <person name="Lewis L."/>
            <person name="Bakaletz L.O."/>
            <person name="Munson R.S. Jr."/>
        </authorList>
    </citation>
    <scope>NUCLEOTIDE SEQUENCE [LARGE SCALE GENOMIC DNA]</scope>
    <source>
        <strain>86-028NP</strain>
    </source>
</reference>